<dbReference type="EMBL" id="FO080169">
    <property type="protein sequence ID" value="CCD61750.2"/>
    <property type="molecule type" value="Genomic_DNA"/>
</dbReference>
<dbReference type="PIR" id="T15327">
    <property type="entry name" value="T15327"/>
</dbReference>
<dbReference type="RefSeq" id="NP_508110.3">
    <property type="nucleotide sequence ID" value="NM_075709.6"/>
</dbReference>
<dbReference type="SMR" id="Q10939"/>
<dbReference type="PaxDb" id="6239-B0310.3"/>
<dbReference type="EnsemblMetazoa" id="B0310.3.1">
    <property type="protein sequence ID" value="B0310.3.1"/>
    <property type="gene ID" value="WBGene00015139"/>
</dbReference>
<dbReference type="EnsemblMetazoa" id="B0310.3.2">
    <property type="protein sequence ID" value="B0310.3.2"/>
    <property type="gene ID" value="WBGene00015139"/>
</dbReference>
<dbReference type="EnsemblMetazoa" id="B0310.3.3">
    <property type="protein sequence ID" value="B0310.3.3"/>
    <property type="gene ID" value="WBGene00015139"/>
</dbReference>
<dbReference type="GeneID" id="181923"/>
<dbReference type="KEGG" id="cel:CELE_B0310.3"/>
<dbReference type="UCSC" id="B0310.3">
    <property type="organism name" value="c. elegans"/>
</dbReference>
<dbReference type="AGR" id="WB:WBGene00015139"/>
<dbReference type="CTD" id="181923"/>
<dbReference type="WormBase" id="B0310.3">
    <property type="protein sequence ID" value="CE46910"/>
    <property type="gene ID" value="WBGene00015139"/>
</dbReference>
<dbReference type="eggNOG" id="ENOG502TIZ1">
    <property type="taxonomic scope" value="Eukaryota"/>
</dbReference>
<dbReference type="HOGENOM" id="CLU_659270_0_0_1"/>
<dbReference type="InParanoid" id="Q10939"/>
<dbReference type="OrthoDB" id="5877935at2759"/>
<dbReference type="PRO" id="PR:Q10939"/>
<dbReference type="Proteomes" id="UP000001940">
    <property type="component" value="Chromosome X"/>
</dbReference>
<dbReference type="Bgee" id="WBGene00015139">
    <property type="expression patterns" value="Expressed in larva and 1 other cell type or tissue"/>
</dbReference>
<dbReference type="GO" id="GO:0016020">
    <property type="term" value="C:membrane"/>
    <property type="evidence" value="ECO:0007669"/>
    <property type="project" value="UniProtKB-SubCell"/>
</dbReference>
<feature type="chain" id="PRO_0000065070" description="Uncharacterized protein B0310.3">
    <location>
        <begin position="1"/>
        <end position="417"/>
    </location>
</feature>
<feature type="transmembrane region" description="Helical" evidence="1">
    <location>
        <begin position="362"/>
        <end position="382"/>
    </location>
</feature>
<feature type="region of interest" description="Disordered" evidence="2">
    <location>
        <begin position="44"/>
        <end position="83"/>
    </location>
</feature>
<feature type="region of interest" description="Disordered" evidence="2">
    <location>
        <begin position="325"/>
        <end position="346"/>
    </location>
</feature>
<feature type="compositionally biased region" description="Low complexity" evidence="2">
    <location>
        <begin position="54"/>
        <end position="64"/>
    </location>
</feature>
<feature type="compositionally biased region" description="Polar residues" evidence="2">
    <location>
        <begin position="65"/>
        <end position="76"/>
    </location>
</feature>
<feature type="compositionally biased region" description="Basic residues" evidence="2">
    <location>
        <begin position="326"/>
        <end position="339"/>
    </location>
</feature>
<proteinExistence type="predicted"/>
<reference key="1">
    <citation type="journal article" date="1998" name="Science">
        <title>Genome sequence of the nematode C. elegans: a platform for investigating biology.</title>
        <authorList>
            <consortium name="The C. elegans sequencing consortium"/>
        </authorList>
    </citation>
    <scope>NUCLEOTIDE SEQUENCE [LARGE SCALE GENOMIC DNA]</scope>
    <source>
        <strain>Bristol N2</strain>
    </source>
</reference>
<keyword id="KW-0472">Membrane</keyword>
<keyword id="KW-1185">Reference proteome</keyword>
<keyword id="KW-0812">Transmembrane</keyword>
<keyword id="KW-1133">Transmembrane helix</keyword>
<protein>
    <recommendedName>
        <fullName>Uncharacterized protein B0310.3</fullName>
    </recommendedName>
</protein>
<gene>
    <name type="ORF">B0310.3</name>
</gene>
<comment type="subcellular location">
    <subcellularLocation>
        <location evidence="3">Membrane</location>
        <topology evidence="3">Single-pass membrane protein</topology>
    </subcellularLocation>
</comment>
<organism>
    <name type="scientific">Caenorhabditis elegans</name>
    <dbReference type="NCBI Taxonomy" id="6239"/>
    <lineage>
        <taxon>Eukaryota</taxon>
        <taxon>Metazoa</taxon>
        <taxon>Ecdysozoa</taxon>
        <taxon>Nematoda</taxon>
        <taxon>Chromadorea</taxon>
        <taxon>Rhabditida</taxon>
        <taxon>Rhabditina</taxon>
        <taxon>Rhabditomorpha</taxon>
        <taxon>Rhabditoidea</taxon>
        <taxon>Rhabditidae</taxon>
        <taxon>Peloderinae</taxon>
        <taxon>Caenorhabditis</taxon>
    </lineage>
</organism>
<evidence type="ECO:0000255" key="1"/>
<evidence type="ECO:0000256" key="2">
    <source>
        <dbReference type="SAM" id="MobiDB-lite"/>
    </source>
</evidence>
<evidence type="ECO:0000305" key="3"/>
<name>YWS3_CAEEL</name>
<sequence length="417" mass="47712">MEGNFLNNPWINCCFVTTYAGVVAQYFKKGAEWFNFTTPSIGTFTNEQNEEDSSNYSTSGYDSSAETISANSSPINRSGVRSRISQKQRQRILKEAHFKAQQLNRKMVVQKSCPPDHEIKPVPSKFYQFDAITDFGFGGPVLLVGMQKDVEVMKLETKEKARSGRKKNRKSKYKCNMYKMTKLAQIVAKIPKKKEVIEIDEDGFQKVSSKKAAKLRTLKPADVPTPPTKVVENKEEVIKLEVIEQPEPIVLPVSTPTVTFSRFEEMKRVVKVEKAQESAKTKALKKSKAISISRHVGFLQILEKLEETEEKPQVENEKKVVVKHVQSARKNQKKGRKNRKVEPPKEEFEPYEEDHYNFKRYFLIIGVYVLVFIYVCTNVLTVGVSYEFPYITLANKNVRAINSTLPKSVNESSFLIR</sequence>
<accession>Q10939</accession>